<sequence>MNLKPLNDRVLVKRLESEEKTAGGLYIPDTAKEKPSRGEVVAAGPGKTADDGKLVAMTVKAGDMVLFNKYAGTEIKIDGVEHLVMREDDILAIIE</sequence>
<accession>Q72AL5</accession>
<dbReference type="EMBL" id="AE017285">
    <property type="protein sequence ID" value="AAS96453.1"/>
    <property type="molecule type" value="Genomic_DNA"/>
</dbReference>
<dbReference type="RefSeq" id="WP_010939263.1">
    <property type="nucleotide sequence ID" value="NC_002937.3"/>
</dbReference>
<dbReference type="RefSeq" id="YP_011194.1">
    <property type="nucleotide sequence ID" value="NC_002937.3"/>
</dbReference>
<dbReference type="SMR" id="Q72AL5"/>
<dbReference type="STRING" id="882.DVU_1977"/>
<dbReference type="PaxDb" id="882-DVU_1977"/>
<dbReference type="EnsemblBacteria" id="AAS96453">
    <property type="protein sequence ID" value="AAS96453"/>
    <property type="gene ID" value="DVU_1977"/>
</dbReference>
<dbReference type="KEGG" id="dvu:DVU_1977"/>
<dbReference type="PATRIC" id="fig|882.5.peg.1816"/>
<dbReference type="eggNOG" id="COG0234">
    <property type="taxonomic scope" value="Bacteria"/>
</dbReference>
<dbReference type="HOGENOM" id="CLU_132825_2_0_7"/>
<dbReference type="OrthoDB" id="9806791at2"/>
<dbReference type="PhylomeDB" id="Q72AL5"/>
<dbReference type="Proteomes" id="UP000002194">
    <property type="component" value="Chromosome"/>
</dbReference>
<dbReference type="GO" id="GO:0005737">
    <property type="term" value="C:cytoplasm"/>
    <property type="evidence" value="ECO:0007669"/>
    <property type="project" value="UniProtKB-SubCell"/>
</dbReference>
<dbReference type="GO" id="GO:0005524">
    <property type="term" value="F:ATP binding"/>
    <property type="evidence" value="ECO:0007669"/>
    <property type="project" value="InterPro"/>
</dbReference>
<dbReference type="GO" id="GO:0046872">
    <property type="term" value="F:metal ion binding"/>
    <property type="evidence" value="ECO:0007669"/>
    <property type="project" value="TreeGrafter"/>
</dbReference>
<dbReference type="GO" id="GO:0044183">
    <property type="term" value="F:protein folding chaperone"/>
    <property type="evidence" value="ECO:0007669"/>
    <property type="project" value="InterPro"/>
</dbReference>
<dbReference type="GO" id="GO:0051087">
    <property type="term" value="F:protein-folding chaperone binding"/>
    <property type="evidence" value="ECO:0007669"/>
    <property type="project" value="TreeGrafter"/>
</dbReference>
<dbReference type="GO" id="GO:0051082">
    <property type="term" value="F:unfolded protein binding"/>
    <property type="evidence" value="ECO:0007669"/>
    <property type="project" value="TreeGrafter"/>
</dbReference>
<dbReference type="GO" id="GO:0051085">
    <property type="term" value="P:chaperone cofactor-dependent protein refolding"/>
    <property type="evidence" value="ECO:0007669"/>
    <property type="project" value="TreeGrafter"/>
</dbReference>
<dbReference type="CDD" id="cd00320">
    <property type="entry name" value="cpn10"/>
    <property type="match status" value="1"/>
</dbReference>
<dbReference type="FunFam" id="2.30.33.40:FF:000001">
    <property type="entry name" value="10 kDa chaperonin"/>
    <property type="match status" value="1"/>
</dbReference>
<dbReference type="Gene3D" id="2.30.33.40">
    <property type="entry name" value="GroES chaperonin"/>
    <property type="match status" value="1"/>
</dbReference>
<dbReference type="HAMAP" id="MF_00580">
    <property type="entry name" value="CH10"/>
    <property type="match status" value="1"/>
</dbReference>
<dbReference type="InterPro" id="IPR020818">
    <property type="entry name" value="Chaperonin_GroES"/>
</dbReference>
<dbReference type="InterPro" id="IPR037124">
    <property type="entry name" value="Chaperonin_GroES_sf"/>
</dbReference>
<dbReference type="InterPro" id="IPR018369">
    <property type="entry name" value="Chaprnonin_Cpn10_CS"/>
</dbReference>
<dbReference type="InterPro" id="IPR011032">
    <property type="entry name" value="GroES-like_sf"/>
</dbReference>
<dbReference type="NCBIfam" id="NF001527">
    <property type="entry name" value="PRK00364.1-2"/>
    <property type="match status" value="1"/>
</dbReference>
<dbReference type="NCBIfam" id="NF001529">
    <property type="entry name" value="PRK00364.1-5"/>
    <property type="match status" value="1"/>
</dbReference>
<dbReference type="NCBIfam" id="NF001531">
    <property type="entry name" value="PRK00364.2-2"/>
    <property type="match status" value="1"/>
</dbReference>
<dbReference type="NCBIfam" id="NF001533">
    <property type="entry name" value="PRK00364.2-4"/>
    <property type="match status" value="1"/>
</dbReference>
<dbReference type="NCBIfam" id="NF001534">
    <property type="entry name" value="PRK00364.2-5"/>
    <property type="match status" value="1"/>
</dbReference>
<dbReference type="PANTHER" id="PTHR10772">
    <property type="entry name" value="10 KDA HEAT SHOCK PROTEIN"/>
    <property type="match status" value="1"/>
</dbReference>
<dbReference type="PANTHER" id="PTHR10772:SF58">
    <property type="entry name" value="CO-CHAPERONIN GROES"/>
    <property type="match status" value="1"/>
</dbReference>
<dbReference type="Pfam" id="PF00166">
    <property type="entry name" value="Cpn10"/>
    <property type="match status" value="1"/>
</dbReference>
<dbReference type="PRINTS" id="PR00297">
    <property type="entry name" value="CHAPERONIN10"/>
</dbReference>
<dbReference type="SMART" id="SM00883">
    <property type="entry name" value="Cpn10"/>
    <property type="match status" value="1"/>
</dbReference>
<dbReference type="SUPFAM" id="SSF50129">
    <property type="entry name" value="GroES-like"/>
    <property type="match status" value="1"/>
</dbReference>
<dbReference type="PROSITE" id="PS00681">
    <property type="entry name" value="CHAPERONINS_CPN10"/>
    <property type="match status" value="1"/>
</dbReference>
<feature type="chain" id="PRO_1000025250" description="Co-chaperonin GroES">
    <location>
        <begin position="1"/>
        <end position="95"/>
    </location>
</feature>
<reference key="1">
    <citation type="journal article" date="2004" name="Nat. Biotechnol.">
        <title>The genome sequence of the anaerobic, sulfate-reducing bacterium Desulfovibrio vulgaris Hildenborough.</title>
        <authorList>
            <person name="Heidelberg J.F."/>
            <person name="Seshadri R."/>
            <person name="Haveman S.A."/>
            <person name="Hemme C.L."/>
            <person name="Paulsen I.T."/>
            <person name="Kolonay J.F."/>
            <person name="Eisen J.A."/>
            <person name="Ward N.L."/>
            <person name="Methe B.A."/>
            <person name="Brinkac L.M."/>
            <person name="Daugherty S.C."/>
            <person name="DeBoy R.T."/>
            <person name="Dodson R.J."/>
            <person name="Durkin A.S."/>
            <person name="Madupu R."/>
            <person name="Nelson W.C."/>
            <person name="Sullivan S.A."/>
            <person name="Fouts D.E."/>
            <person name="Haft D.H."/>
            <person name="Selengut J."/>
            <person name="Peterson J.D."/>
            <person name="Davidsen T.M."/>
            <person name="Zafar N."/>
            <person name="Zhou L."/>
            <person name="Radune D."/>
            <person name="Dimitrov G."/>
            <person name="Hance M."/>
            <person name="Tran K."/>
            <person name="Khouri H.M."/>
            <person name="Gill J."/>
            <person name="Utterback T.R."/>
            <person name="Feldblyum T.V."/>
            <person name="Wall J.D."/>
            <person name="Voordouw G."/>
            <person name="Fraser C.M."/>
        </authorList>
    </citation>
    <scope>NUCLEOTIDE SEQUENCE [LARGE SCALE GENOMIC DNA]</scope>
    <source>
        <strain>ATCC 29579 / DSM 644 / CCUG 34227 / NCIMB 8303 / VKM B-1760 / Hildenborough</strain>
    </source>
</reference>
<gene>
    <name evidence="1" type="primary">groES</name>
    <name evidence="1" type="synonym">groS</name>
    <name type="ordered locus">DVU_1977</name>
</gene>
<keyword id="KW-0143">Chaperone</keyword>
<keyword id="KW-0963">Cytoplasm</keyword>
<keyword id="KW-1185">Reference proteome</keyword>
<evidence type="ECO:0000255" key="1">
    <source>
        <dbReference type="HAMAP-Rule" id="MF_00580"/>
    </source>
</evidence>
<proteinExistence type="inferred from homology"/>
<comment type="function">
    <text evidence="1">Together with the chaperonin GroEL, plays an essential role in assisting protein folding. The GroEL-GroES system forms a nano-cage that allows encapsulation of the non-native substrate proteins and provides a physical environment optimized to promote and accelerate protein folding. GroES binds to the apical surface of the GroEL ring, thereby capping the opening of the GroEL channel.</text>
</comment>
<comment type="subunit">
    <text evidence="1">Heptamer of 7 subunits arranged in a ring. Interacts with the chaperonin GroEL.</text>
</comment>
<comment type="subcellular location">
    <subcellularLocation>
        <location evidence="1">Cytoplasm</location>
    </subcellularLocation>
</comment>
<comment type="similarity">
    <text evidence="1">Belongs to the GroES chaperonin family.</text>
</comment>
<name>CH10_NITV2</name>
<protein>
    <recommendedName>
        <fullName evidence="1">Co-chaperonin GroES</fullName>
    </recommendedName>
    <alternativeName>
        <fullName evidence="1">10 kDa chaperonin</fullName>
    </alternativeName>
    <alternativeName>
        <fullName evidence="1">Chaperonin-10</fullName>
        <shortName evidence="1">Cpn10</shortName>
    </alternativeName>
</protein>
<organism>
    <name type="scientific">Nitratidesulfovibrio vulgaris (strain ATCC 29579 / DSM 644 / CCUG 34227 / NCIMB 8303 / VKM B-1760 / Hildenborough)</name>
    <name type="common">Desulfovibrio vulgaris</name>
    <dbReference type="NCBI Taxonomy" id="882"/>
    <lineage>
        <taxon>Bacteria</taxon>
        <taxon>Pseudomonadati</taxon>
        <taxon>Thermodesulfobacteriota</taxon>
        <taxon>Desulfovibrionia</taxon>
        <taxon>Desulfovibrionales</taxon>
        <taxon>Desulfovibrionaceae</taxon>
        <taxon>Nitratidesulfovibrio</taxon>
    </lineage>
</organism>